<comment type="function">
    <text evidence="1">Part of the twin-arginine translocation (Tat) system that transports large folded proteins containing a characteristic twin-arginine motif in their signal peptide across membranes. TatA could form the protein-conducting channel of the Tat system.</text>
</comment>
<comment type="subunit">
    <text evidence="1">The Tat system comprises two distinct complexes: a TatABC complex, containing multiple copies of TatA, TatB and TatC subunits, and a separate TatA complex, containing only TatA subunits. Substrates initially bind to the TatABC complex, which probably triggers association of the separate TatA complex to form the active translocon.</text>
</comment>
<comment type="subcellular location">
    <subcellularLocation>
        <location evidence="1">Cell inner membrane</location>
        <topology evidence="1">Single-pass membrane protein</topology>
    </subcellularLocation>
</comment>
<comment type="similarity">
    <text evidence="1">Belongs to the TatA/E family.</text>
</comment>
<feature type="chain" id="PRO_1000071816" description="Sec-independent protein translocase protein TatA">
    <location>
        <begin position="1"/>
        <end position="79"/>
    </location>
</feature>
<feature type="transmembrane region" description="Helical" evidence="1">
    <location>
        <begin position="1"/>
        <end position="21"/>
    </location>
</feature>
<feature type="region of interest" description="Disordered" evidence="2">
    <location>
        <begin position="43"/>
        <end position="63"/>
    </location>
</feature>
<feature type="compositionally biased region" description="Low complexity" evidence="2">
    <location>
        <begin position="51"/>
        <end position="63"/>
    </location>
</feature>
<reference key="1">
    <citation type="submission" date="2006-02" db="EMBL/GenBank/DDBJ databases">
        <title>Complete sequence of chromosome of Rhodoferax ferrireducens DSM 15236.</title>
        <authorList>
            <person name="Copeland A."/>
            <person name="Lucas S."/>
            <person name="Lapidus A."/>
            <person name="Barry K."/>
            <person name="Detter J.C."/>
            <person name="Glavina del Rio T."/>
            <person name="Hammon N."/>
            <person name="Israni S."/>
            <person name="Pitluck S."/>
            <person name="Brettin T."/>
            <person name="Bruce D."/>
            <person name="Han C."/>
            <person name="Tapia R."/>
            <person name="Gilna P."/>
            <person name="Kiss H."/>
            <person name="Schmutz J."/>
            <person name="Larimer F."/>
            <person name="Land M."/>
            <person name="Kyrpides N."/>
            <person name="Ivanova N."/>
            <person name="Richardson P."/>
        </authorList>
    </citation>
    <scope>NUCLEOTIDE SEQUENCE [LARGE SCALE GENOMIC DNA]</scope>
    <source>
        <strain>ATCC BAA-621 / DSM 15236 / T118</strain>
    </source>
</reference>
<keyword id="KW-0997">Cell inner membrane</keyword>
<keyword id="KW-1003">Cell membrane</keyword>
<keyword id="KW-0472">Membrane</keyword>
<keyword id="KW-0653">Protein transport</keyword>
<keyword id="KW-1185">Reference proteome</keyword>
<keyword id="KW-0811">Translocation</keyword>
<keyword id="KW-0812">Transmembrane</keyword>
<keyword id="KW-1133">Transmembrane helix</keyword>
<keyword id="KW-0813">Transport</keyword>
<sequence length="79" mass="8119">MGFSTTHLLIFLVIIIVIFGTKKLRNIGSDLGGAVKGFKDGMKEGSDKAADAPAAAPQQVASSATAAKETIDVEAKTKA</sequence>
<proteinExistence type="inferred from homology"/>
<organism>
    <name type="scientific">Albidiferax ferrireducens (strain ATCC BAA-621 / DSM 15236 / T118)</name>
    <name type="common">Rhodoferax ferrireducens</name>
    <dbReference type="NCBI Taxonomy" id="338969"/>
    <lineage>
        <taxon>Bacteria</taxon>
        <taxon>Pseudomonadati</taxon>
        <taxon>Pseudomonadota</taxon>
        <taxon>Betaproteobacteria</taxon>
        <taxon>Burkholderiales</taxon>
        <taxon>Comamonadaceae</taxon>
        <taxon>Rhodoferax</taxon>
    </lineage>
</organism>
<name>TATA_ALBFT</name>
<protein>
    <recommendedName>
        <fullName evidence="1">Sec-independent protein translocase protein TatA</fullName>
    </recommendedName>
</protein>
<gene>
    <name evidence="1" type="primary">tatA</name>
    <name type="ordered locus">Rfer_2956</name>
</gene>
<dbReference type="EMBL" id="CP000267">
    <property type="protein sequence ID" value="ABD70667.1"/>
    <property type="molecule type" value="Genomic_DNA"/>
</dbReference>
<dbReference type="RefSeq" id="WP_011465233.1">
    <property type="nucleotide sequence ID" value="NC_007908.1"/>
</dbReference>
<dbReference type="SMR" id="Q21U86"/>
<dbReference type="STRING" id="338969.Rfer_2956"/>
<dbReference type="KEGG" id="rfr:Rfer_2956"/>
<dbReference type="eggNOG" id="COG1826">
    <property type="taxonomic scope" value="Bacteria"/>
</dbReference>
<dbReference type="HOGENOM" id="CLU_086034_5_1_4"/>
<dbReference type="Proteomes" id="UP000008332">
    <property type="component" value="Chromosome"/>
</dbReference>
<dbReference type="GO" id="GO:0033281">
    <property type="term" value="C:TAT protein transport complex"/>
    <property type="evidence" value="ECO:0007669"/>
    <property type="project" value="UniProtKB-UniRule"/>
</dbReference>
<dbReference type="GO" id="GO:0008320">
    <property type="term" value="F:protein transmembrane transporter activity"/>
    <property type="evidence" value="ECO:0007669"/>
    <property type="project" value="UniProtKB-UniRule"/>
</dbReference>
<dbReference type="GO" id="GO:0043953">
    <property type="term" value="P:protein transport by the Tat complex"/>
    <property type="evidence" value="ECO:0007669"/>
    <property type="project" value="UniProtKB-UniRule"/>
</dbReference>
<dbReference type="Gene3D" id="1.20.5.3310">
    <property type="match status" value="1"/>
</dbReference>
<dbReference type="HAMAP" id="MF_00236">
    <property type="entry name" value="TatA_E"/>
    <property type="match status" value="1"/>
</dbReference>
<dbReference type="InterPro" id="IPR003369">
    <property type="entry name" value="TatA/B/E"/>
</dbReference>
<dbReference type="InterPro" id="IPR006312">
    <property type="entry name" value="TatA/E"/>
</dbReference>
<dbReference type="NCBIfam" id="NF002813">
    <property type="entry name" value="PRK02958.1"/>
    <property type="match status" value="1"/>
</dbReference>
<dbReference type="NCBIfam" id="TIGR01411">
    <property type="entry name" value="tatAE"/>
    <property type="match status" value="1"/>
</dbReference>
<dbReference type="PANTHER" id="PTHR42982">
    <property type="entry name" value="SEC-INDEPENDENT PROTEIN TRANSLOCASE PROTEIN TATA"/>
    <property type="match status" value="1"/>
</dbReference>
<dbReference type="PANTHER" id="PTHR42982:SF1">
    <property type="entry name" value="SEC-INDEPENDENT PROTEIN TRANSLOCASE PROTEIN TATA"/>
    <property type="match status" value="1"/>
</dbReference>
<dbReference type="Pfam" id="PF02416">
    <property type="entry name" value="TatA_B_E"/>
    <property type="match status" value="1"/>
</dbReference>
<evidence type="ECO:0000255" key="1">
    <source>
        <dbReference type="HAMAP-Rule" id="MF_00236"/>
    </source>
</evidence>
<evidence type="ECO:0000256" key="2">
    <source>
        <dbReference type="SAM" id="MobiDB-lite"/>
    </source>
</evidence>
<accession>Q21U86</accession>